<accession>Q8ZKA2</accession>
<keyword id="KW-0963">Cytoplasm</keyword>
<keyword id="KW-0489">Methyltransferase</keyword>
<keyword id="KW-1185">Reference proteome</keyword>
<keyword id="KW-0698">rRNA processing</keyword>
<keyword id="KW-0949">S-adenosyl-L-methionine</keyword>
<keyword id="KW-0808">Transferase</keyword>
<protein>
    <recommendedName>
        <fullName evidence="1">23S rRNA (guanosine-2'-O-)-methyltransferase RlmB</fullName>
        <ecNumber evidence="1">2.1.1.185</ecNumber>
    </recommendedName>
    <alternativeName>
        <fullName evidence="1">23S rRNA (guanosine2251 2'-O)-methyltransferase</fullName>
    </alternativeName>
    <alternativeName>
        <fullName evidence="1">23S rRNA Gm2251 2'-O-methyltransferase</fullName>
    </alternativeName>
</protein>
<organism>
    <name type="scientific">Salmonella typhimurium (strain LT2 / SGSC1412 / ATCC 700720)</name>
    <dbReference type="NCBI Taxonomy" id="99287"/>
    <lineage>
        <taxon>Bacteria</taxon>
        <taxon>Pseudomonadati</taxon>
        <taxon>Pseudomonadota</taxon>
        <taxon>Gammaproteobacteria</taxon>
        <taxon>Enterobacterales</taxon>
        <taxon>Enterobacteriaceae</taxon>
        <taxon>Salmonella</taxon>
    </lineage>
</organism>
<gene>
    <name evidence="1" type="primary">rlmB</name>
    <name type="ordered locus">STM4369</name>
</gene>
<evidence type="ECO:0000255" key="1">
    <source>
        <dbReference type="HAMAP-Rule" id="MF_01887"/>
    </source>
</evidence>
<proteinExistence type="inferred from homology"/>
<feature type="chain" id="PRO_0000159802" description="23S rRNA (guanosine-2'-O-)-methyltransferase RlmB">
    <location>
        <begin position="1"/>
        <end position="243"/>
    </location>
</feature>
<feature type="binding site" evidence="1">
    <location>
        <position position="196"/>
    </location>
    <ligand>
        <name>S-adenosyl-L-methionine</name>
        <dbReference type="ChEBI" id="CHEBI:59789"/>
    </ligand>
</feature>
<feature type="binding site" evidence="1">
    <location>
        <position position="216"/>
    </location>
    <ligand>
        <name>S-adenosyl-L-methionine</name>
        <dbReference type="ChEBI" id="CHEBI:59789"/>
    </ligand>
</feature>
<feature type="binding site" evidence="1">
    <location>
        <position position="225"/>
    </location>
    <ligand>
        <name>S-adenosyl-L-methionine</name>
        <dbReference type="ChEBI" id="CHEBI:59789"/>
    </ligand>
</feature>
<reference key="1">
    <citation type="journal article" date="2001" name="Nature">
        <title>Complete genome sequence of Salmonella enterica serovar Typhimurium LT2.</title>
        <authorList>
            <person name="McClelland M."/>
            <person name="Sanderson K.E."/>
            <person name="Spieth J."/>
            <person name="Clifton S.W."/>
            <person name="Latreille P."/>
            <person name="Courtney L."/>
            <person name="Porwollik S."/>
            <person name="Ali J."/>
            <person name="Dante M."/>
            <person name="Du F."/>
            <person name="Hou S."/>
            <person name="Layman D."/>
            <person name="Leonard S."/>
            <person name="Nguyen C."/>
            <person name="Scott K."/>
            <person name="Holmes A."/>
            <person name="Grewal N."/>
            <person name="Mulvaney E."/>
            <person name="Ryan E."/>
            <person name="Sun H."/>
            <person name="Florea L."/>
            <person name="Miller W."/>
            <person name="Stoneking T."/>
            <person name="Nhan M."/>
            <person name="Waterston R."/>
            <person name="Wilson R.K."/>
        </authorList>
    </citation>
    <scope>NUCLEOTIDE SEQUENCE [LARGE SCALE GENOMIC DNA]</scope>
    <source>
        <strain>LT2 / SGSC1412 / ATCC 700720</strain>
    </source>
</reference>
<dbReference type="EC" id="2.1.1.185" evidence="1"/>
<dbReference type="EMBL" id="AE006468">
    <property type="protein sequence ID" value="AAL23189.1"/>
    <property type="molecule type" value="Genomic_DNA"/>
</dbReference>
<dbReference type="RefSeq" id="WP_001293274.1">
    <property type="nucleotide sequence ID" value="NC_003197.2"/>
</dbReference>
<dbReference type="SMR" id="Q8ZKA2"/>
<dbReference type="STRING" id="99287.STM4369"/>
<dbReference type="PaxDb" id="99287-STM4369"/>
<dbReference type="KEGG" id="stm:STM4369"/>
<dbReference type="PATRIC" id="fig|99287.12.peg.4593"/>
<dbReference type="HOGENOM" id="CLU_021322_0_1_6"/>
<dbReference type="OMA" id="QVPPYEY"/>
<dbReference type="PhylomeDB" id="Q8ZKA2"/>
<dbReference type="BioCyc" id="SENT99287:STM4369-MONOMER"/>
<dbReference type="Proteomes" id="UP000001014">
    <property type="component" value="Chromosome"/>
</dbReference>
<dbReference type="GO" id="GO:0005829">
    <property type="term" value="C:cytosol"/>
    <property type="evidence" value="ECO:0000318"/>
    <property type="project" value="GO_Central"/>
</dbReference>
<dbReference type="GO" id="GO:0003723">
    <property type="term" value="F:RNA binding"/>
    <property type="evidence" value="ECO:0007669"/>
    <property type="project" value="InterPro"/>
</dbReference>
<dbReference type="GO" id="GO:0070039">
    <property type="term" value="F:rRNA (guanosine-2'-O-)-methyltransferase activity"/>
    <property type="evidence" value="ECO:0000318"/>
    <property type="project" value="GO_Central"/>
</dbReference>
<dbReference type="CDD" id="cd18103">
    <property type="entry name" value="SpoU-like_RlmB"/>
    <property type="match status" value="1"/>
</dbReference>
<dbReference type="FunFam" id="3.40.1280.10:FF:000005">
    <property type="entry name" value="23S rRNA (guanosine-2'-O-)-methyltransferase RlmB"/>
    <property type="match status" value="1"/>
</dbReference>
<dbReference type="FunFam" id="3.30.1330.30:FF:000007">
    <property type="entry name" value="23S rRNA methyltransferase"/>
    <property type="match status" value="1"/>
</dbReference>
<dbReference type="Gene3D" id="3.30.1330.30">
    <property type="match status" value="1"/>
</dbReference>
<dbReference type="Gene3D" id="3.40.1280.10">
    <property type="match status" value="1"/>
</dbReference>
<dbReference type="HAMAP" id="MF_01887">
    <property type="entry name" value="23SrRNA_methyltr_B"/>
    <property type="match status" value="1"/>
</dbReference>
<dbReference type="InterPro" id="IPR024915">
    <property type="entry name" value="23S_rRNA_MeTrfase_RlmB"/>
</dbReference>
<dbReference type="InterPro" id="IPR029028">
    <property type="entry name" value="Alpha/beta_knot_MTases"/>
</dbReference>
<dbReference type="InterPro" id="IPR029064">
    <property type="entry name" value="Ribosomal_eL30-like_sf"/>
</dbReference>
<dbReference type="InterPro" id="IPR004441">
    <property type="entry name" value="rRNA_MeTrfase_TrmH"/>
</dbReference>
<dbReference type="InterPro" id="IPR001537">
    <property type="entry name" value="SpoU_MeTrfase"/>
</dbReference>
<dbReference type="InterPro" id="IPR013123">
    <property type="entry name" value="SpoU_subst-bd"/>
</dbReference>
<dbReference type="InterPro" id="IPR029026">
    <property type="entry name" value="tRNA_m1G_MTases_N"/>
</dbReference>
<dbReference type="NCBIfam" id="NF008386">
    <property type="entry name" value="PRK11181.1"/>
    <property type="match status" value="1"/>
</dbReference>
<dbReference type="NCBIfam" id="TIGR00186">
    <property type="entry name" value="rRNA_methyl_3"/>
    <property type="match status" value="1"/>
</dbReference>
<dbReference type="PANTHER" id="PTHR46429">
    <property type="entry name" value="23S RRNA (GUANOSINE-2'-O-)-METHYLTRANSFERASE RLMB"/>
    <property type="match status" value="1"/>
</dbReference>
<dbReference type="PANTHER" id="PTHR46429:SF1">
    <property type="entry name" value="23S RRNA (GUANOSINE-2'-O-)-METHYLTRANSFERASE RLMB"/>
    <property type="match status" value="1"/>
</dbReference>
<dbReference type="Pfam" id="PF00588">
    <property type="entry name" value="SpoU_methylase"/>
    <property type="match status" value="1"/>
</dbReference>
<dbReference type="Pfam" id="PF08032">
    <property type="entry name" value="SpoU_sub_bind"/>
    <property type="match status" value="1"/>
</dbReference>
<dbReference type="SMART" id="SM00967">
    <property type="entry name" value="SpoU_sub_bind"/>
    <property type="match status" value="1"/>
</dbReference>
<dbReference type="SUPFAM" id="SSF75217">
    <property type="entry name" value="alpha/beta knot"/>
    <property type="match status" value="1"/>
</dbReference>
<dbReference type="SUPFAM" id="SSF55315">
    <property type="entry name" value="L30e-like"/>
    <property type="match status" value="1"/>
</dbReference>
<sequence>MSEMIYGIHAVQALLERAPERFQEVFILKGREDKRLLPLIHALESQGVVIQLANRQYLDEKSDGAVHQGIIARVKPGRQYQENDLPDLIALHDRPFLLILDGVTDPHNLGACLRSADAAGVHAVIVPKDRSAQLNATAKKVACGAAESVPLIRVTNLARTMRMLQEENIWIVGTAGEADHTLYQSKMPGRMALVMGAEGEGMRRLTREHCDELISIPMAGSVSSLNVSVATGICLFEAVRQRT</sequence>
<comment type="function">
    <text evidence="1">Specifically methylates the ribose of guanosine 2251 in 23S rRNA.</text>
</comment>
<comment type="catalytic activity">
    <reaction evidence="1">
        <text>guanosine(2251) in 23S rRNA + S-adenosyl-L-methionine = 2'-O-methylguanosine(2251) in 23S rRNA + S-adenosyl-L-homocysteine + H(+)</text>
        <dbReference type="Rhea" id="RHEA:24140"/>
        <dbReference type="Rhea" id="RHEA-COMP:10239"/>
        <dbReference type="Rhea" id="RHEA-COMP:10241"/>
        <dbReference type="ChEBI" id="CHEBI:15378"/>
        <dbReference type="ChEBI" id="CHEBI:57856"/>
        <dbReference type="ChEBI" id="CHEBI:59789"/>
        <dbReference type="ChEBI" id="CHEBI:74269"/>
        <dbReference type="ChEBI" id="CHEBI:74445"/>
        <dbReference type="EC" id="2.1.1.185"/>
    </reaction>
</comment>
<comment type="subunit">
    <text evidence="1">Homodimer.</text>
</comment>
<comment type="subcellular location">
    <subcellularLocation>
        <location evidence="1">Cytoplasm</location>
    </subcellularLocation>
</comment>
<comment type="similarity">
    <text evidence="1">Belongs to the class IV-like SAM-binding methyltransferase superfamily. RNA methyltransferase TrmH family. RlmB subfamily.</text>
</comment>
<name>RLMB_SALTY</name>